<feature type="chain" id="PRO_1000010355" description="Imidazoleglycerol-phosphate dehydratase">
    <location>
        <begin position="1"/>
        <end position="192"/>
    </location>
</feature>
<evidence type="ECO:0000255" key="1">
    <source>
        <dbReference type="HAMAP-Rule" id="MF_00076"/>
    </source>
</evidence>
<protein>
    <recommendedName>
        <fullName evidence="1">Imidazoleglycerol-phosphate dehydratase</fullName>
        <shortName evidence="1">IGPD</shortName>
        <ecNumber evidence="1">4.2.1.19</ecNumber>
    </recommendedName>
</protein>
<accession>A7X766</accession>
<name>HIS7_STAA1</name>
<reference key="1">
    <citation type="journal article" date="2008" name="Antimicrob. Agents Chemother.">
        <title>Mutated response regulator graR is responsible for phenotypic conversion of Staphylococcus aureus from heterogeneous vancomycin-intermediate resistance to vancomycin-intermediate resistance.</title>
        <authorList>
            <person name="Neoh H.-M."/>
            <person name="Cui L."/>
            <person name="Yuzawa H."/>
            <person name="Takeuchi F."/>
            <person name="Matsuo M."/>
            <person name="Hiramatsu K."/>
        </authorList>
    </citation>
    <scope>NUCLEOTIDE SEQUENCE [LARGE SCALE GENOMIC DNA]</scope>
    <source>
        <strain>Mu3 / ATCC 700698</strain>
    </source>
</reference>
<comment type="catalytic activity">
    <reaction evidence="1">
        <text>D-erythro-1-(imidazol-4-yl)glycerol 3-phosphate = 3-(imidazol-4-yl)-2-oxopropyl phosphate + H2O</text>
        <dbReference type="Rhea" id="RHEA:11040"/>
        <dbReference type="ChEBI" id="CHEBI:15377"/>
        <dbReference type="ChEBI" id="CHEBI:57766"/>
        <dbReference type="ChEBI" id="CHEBI:58278"/>
        <dbReference type="EC" id="4.2.1.19"/>
    </reaction>
</comment>
<comment type="pathway">
    <text evidence="1">Amino-acid biosynthesis; L-histidine biosynthesis; L-histidine from 5-phospho-alpha-D-ribose 1-diphosphate: step 6/9.</text>
</comment>
<comment type="subcellular location">
    <subcellularLocation>
        <location evidence="1">Cytoplasm</location>
    </subcellularLocation>
</comment>
<comment type="similarity">
    <text evidence="1">Belongs to the imidazoleglycerol-phosphate dehydratase family.</text>
</comment>
<organism>
    <name type="scientific">Staphylococcus aureus (strain Mu3 / ATCC 700698)</name>
    <dbReference type="NCBI Taxonomy" id="418127"/>
    <lineage>
        <taxon>Bacteria</taxon>
        <taxon>Bacillati</taxon>
        <taxon>Bacillota</taxon>
        <taxon>Bacilli</taxon>
        <taxon>Bacillales</taxon>
        <taxon>Staphylococcaceae</taxon>
        <taxon>Staphylococcus</taxon>
    </lineage>
</organism>
<gene>
    <name evidence="1" type="primary">hisB</name>
    <name type="ordered locus">SAHV_2660</name>
</gene>
<keyword id="KW-0028">Amino-acid biosynthesis</keyword>
<keyword id="KW-0963">Cytoplasm</keyword>
<keyword id="KW-0368">Histidine biosynthesis</keyword>
<keyword id="KW-0456">Lyase</keyword>
<proteinExistence type="inferred from homology"/>
<sequence length="192" mass="21456">MIYQKQRNTAETQLNISISDDQSPSHINTGVGFLNHMLTLFTFHSGLSLNIEAQGDIDVDDHHVTEDIGIVIGQLLLEMIKDKKHFVRYGTMYIPMDETLARVVVDISGRPYLSFNASLSKEKVGTFDTELVEEFFRAVVINARLTTHIDLIRGGNTHHEIEAIFKAFSRALGIALTATDDQRVPSSKGVIE</sequence>
<dbReference type="EC" id="4.2.1.19" evidence="1"/>
<dbReference type="EMBL" id="AP009324">
    <property type="protein sequence ID" value="BAF79543.1"/>
    <property type="molecule type" value="Genomic_DNA"/>
</dbReference>
<dbReference type="RefSeq" id="WP_000640266.1">
    <property type="nucleotide sequence ID" value="NC_009782.1"/>
</dbReference>
<dbReference type="SMR" id="A7X766"/>
<dbReference type="KEGG" id="saw:SAHV_2660"/>
<dbReference type="HOGENOM" id="CLU_044308_3_0_9"/>
<dbReference type="UniPathway" id="UPA00031">
    <property type="reaction ID" value="UER00011"/>
</dbReference>
<dbReference type="GO" id="GO:0005737">
    <property type="term" value="C:cytoplasm"/>
    <property type="evidence" value="ECO:0007669"/>
    <property type="project" value="UniProtKB-SubCell"/>
</dbReference>
<dbReference type="GO" id="GO:0004424">
    <property type="term" value="F:imidazoleglycerol-phosphate dehydratase activity"/>
    <property type="evidence" value="ECO:0007669"/>
    <property type="project" value="UniProtKB-UniRule"/>
</dbReference>
<dbReference type="GO" id="GO:0000105">
    <property type="term" value="P:L-histidine biosynthetic process"/>
    <property type="evidence" value="ECO:0007669"/>
    <property type="project" value="UniProtKB-UniRule"/>
</dbReference>
<dbReference type="CDD" id="cd07914">
    <property type="entry name" value="IGPD"/>
    <property type="match status" value="1"/>
</dbReference>
<dbReference type="FunFam" id="3.30.230.40:FF:000001">
    <property type="entry name" value="Imidazoleglycerol-phosphate dehydratase HisB"/>
    <property type="match status" value="1"/>
</dbReference>
<dbReference type="FunFam" id="3.30.230.40:FF:000003">
    <property type="entry name" value="Imidazoleglycerol-phosphate dehydratase HisB"/>
    <property type="match status" value="1"/>
</dbReference>
<dbReference type="Gene3D" id="3.30.230.40">
    <property type="entry name" value="Imidazole glycerol phosphate dehydratase, domain 1"/>
    <property type="match status" value="2"/>
</dbReference>
<dbReference type="HAMAP" id="MF_00076">
    <property type="entry name" value="HisB"/>
    <property type="match status" value="1"/>
</dbReference>
<dbReference type="InterPro" id="IPR038494">
    <property type="entry name" value="IGPD_sf"/>
</dbReference>
<dbReference type="InterPro" id="IPR000807">
    <property type="entry name" value="ImidazoleglycerolP_deHydtase"/>
</dbReference>
<dbReference type="InterPro" id="IPR020565">
    <property type="entry name" value="ImidazoleglycerP_deHydtase_CS"/>
</dbReference>
<dbReference type="InterPro" id="IPR020568">
    <property type="entry name" value="Ribosomal_Su5_D2-typ_SF"/>
</dbReference>
<dbReference type="NCBIfam" id="NF002107">
    <property type="entry name" value="PRK00951.1-2"/>
    <property type="match status" value="1"/>
</dbReference>
<dbReference type="NCBIfam" id="NF002111">
    <property type="entry name" value="PRK00951.2-1"/>
    <property type="match status" value="1"/>
</dbReference>
<dbReference type="NCBIfam" id="NF002114">
    <property type="entry name" value="PRK00951.2-4"/>
    <property type="match status" value="1"/>
</dbReference>
<dbReference type="PANTHER" id="PTHR23133:SF2">
    <property type="entry name" value="IMIDAZOLEGLYCEROL-PHOSPHATE DEHYDRATASE"/>
    <property type="match status" value="1"/>
</dbReference>
<dbReference type="PANTHER" id="PTHR23133">
    <property type="entry name" value="IMIDAZOLEGLYCEROL-PHOSPHATE DEHYDRATASE HIS7"/>
    <property type="match status" value="1"/>
</dbReference>
<dbReference type="Pfam" id="PF00475">
    <property type="entry name" value="IGPD"/>
    <property type="match status" value="1"/>
</dbReference>
<dbReference type="SUPFAM" id="SSF54211">
    <property type="entry name" value="Ribosomal protein S5 domain 2-like"/>
    <property type="match status" value="2"/>
</dbReference>
<dbReference type="PROSITE" id="PS00954">
    <property type="entry name" value="IGP_DEHYDRATASE_1"/>
    <property type="match status" value="1"/>
</dbReference>
<dbReference type="PROSITE" id="PS00955">
    <property type="entry name" value="IGP_DEHYDRATASE_2"/>
    <property type="match status" value="1"/>
</dbReference>